<name>NDB3S_OPICY</name>
<protein>
    <recommendedName>
        <fullName evidence="5">Probable antimicrobial peptide clone Con10</fullName>
    </recommendedName>
</protein>
<evidence type="ECO:0000255" key="1"/>
<evidence type="ECO:0000269" key="2">
    <source>
    </source>
</evidence>
<evidence type="ECO:0000305" key="3"/>
<evidence type="ECO:0000305" key="4">
    <source>
    </source>
</evidence>
<evidence type="ECO:0000312" key="5">
    <source>
        <dbReference type="EMBL" id="CAX51401.1"/>
    </source>
</evidence>
<evidence type="ECO:0000312" key="6">
    <source>
        <dbReference type="EMBL" id="CAX51402.1"/>
    </source>
</evidence>
<sequence length="80" mass="9291">MQYKTKTFLVIFLAYLVVTNEAEAFWSFLVKAASKILPSLIGGGDDNKSSSKRKREIEDFFDPYQRELDLELERLLSQLQ</sequence>
<organism>
    <name type="scientific">Opisthacanthus cayaporum</name>
    <name type="common">South American scorpion</name>
    <dbReference type="NCBI Taxonomy" id="573324"/>
    <lineage>
        <taxon>Eukaryota</taxon>
        <taxon>Metazoa</taxon>
        <taxon>Ecdysozoa</taxon>
        <taxon>Arthropoda</taxon>
        <taxon>Chelicerata</taxon>
        <taxon>Arachnida</taxon>
        <taxon>Scorpiones</taxon>
        <taxon>Iurida</taxon>
        <taxon>Scorpionoidea</taxon>
        <taxon>Hemiscorpiidae</taxon>
        <taxon>Opisthacanthus</taxon>
    </lineage>
</organism>
<accession>C5J897</accession>
<proteinExistence type="inferred from homology"/>
<feature type="signal peptide" evidence="1">
    <location>
        <begin position="1"/>
        <end position="24"/>
    </location>
</feature>
<feature type="peptide" id="PRO_0000398606" description="Probable antimicrobial peptide clone Con10" evidence="4">
    <location>
        <begin position="25"/>
        <end position="51"/>
    </location>
</feature>
<feature type="propeptide" id="PRO_0000398607" evidence="4">
    <location>
        <begin position="56"/>
        <end position="80"/>
    </location>
</feature>
<keyword id="KW-0929">Antimicrobial</keyword>
<keyword id="KW-0165">Cleavage on pair of basic residues</keyword>
<keyword id="KW-0295">Fungicide</keyword>
<keyword id="KW-0472">Membrane</keyword>
<keyword id="KW-0964">Secreted</keyword>
<keyword id="KW-0732">Signal</keyword>
<keyword id="KW-1052">Target cell membrane</keyword>
<keyword id="KW-1053">Target membrane</keyword>
<comment type="function">
    <text evidence="2">Antimicrobial peptide (PubMed:27917162). Has antifungal activity against all strains tested (MIC=12.5-200 uM) (PubMed:27917162). May act by disrupting the integrity of the bacterial cell membrane.</text>
</comment>
<comment type="subcellular location">
    <subcellularLocation>
        <location evidence="4">Secreted</location>
    </subcellularLocation>
    <subcellularLocation>
        <location evidence="3">Target cell membrane</location>
    </subcellularLocation>
</comment>
<comment type="tissue specificity">
    <text evidence="4">Expressed by the venom gland.</text>
</comment>
<comment type="similarity">
    <text evidence="3">Belongs to the non-disulfide-bridged peptide (NDBP) superfamily. Medium-length antimicrobial peptide (group 3) family.</text>
</comment>
<reference evidence="5 6" key="1">
    <citation type="journal article" date="2009" name="Toxicon">
        <title>Cloning and characterization of cDNA sequences encoding for new venom peptides of the Brazilian scorpion Opisthacanthus cayaporum.</title>
        <authorList>
            <person name="Silva E.C."/>
            <person name="Camargos T.S."/>
            <person name="Maranhao A.Q."/>
            <person name="Silva-Pereira I."/>
            <person name="Silva L.P."/>
            <person name="Possani L.D."/>
            <person name="Schwartz E.F."/>
        </authorList>
    </citation>
    <scope>NUCLEOTIDE SEQUENCE [MRNA]</scope>
    <source>
        <tissue>Venom gland</tissue>
    </source>
</reference>
<reference key="2">
    <citation type="journal article" date="2016" name="Front. Microbiol.">
        <title>Activity of scorpion venom-derived antifungal peptides against planktonic cells of Candida spp. and Cryptococcus neoformans and Candida albicans biofilms.</title>
        <authorList>
            <person name="Guilhelmelli F."/>
            <person name="Vilela N."/>
            <person name="Smidt K.S."/>
            <person name="de Oliveira M.A."/>
            <person name="da Cunha Morales Alvares A."/>
            <person name="Rigonatto M.C."/>
            <person name="da Silva Costa P.H."/>
            <person name="Tavares A.H."/>
            <person name="de Freitas S.M."/>
            <person name="Nicola A.M."/>
            <person name="Franco O.L."/>
            <person name="Derengowski L.D."/>
            <person name="Schwartz E.F."/>
            <person name="Mortari M.R."/>
            <person name="Bocca A.L."/>
            <person name="Albuquerque P."/>
            <person name="Silva-Pereira I."/>
        </authorList>
    </citation>
    <scope>FUNCTION</scope>
    <scope>SYNTHESIS OF 25-51</scope>
</reference>
<dbReference type="EMBL" id="FM998756">
    <property type="protein sequence ID" value="CAX51401.1"/>
    <property type="molecule type" value="mRNA"/>
</dbReference>
<dbReference type="EMBL" id="FM998757">
    <property type="protein sequence ID" value="CAX51402.1"/>
    <property type="molecule type" value="mRNA"/>
</dbReference>
<dbReference type="GO" id="GO:0005576">
    <property type="term" value="C:extracellular region"/>
    <property type="evidence" value="ECO:0007669"/>
    <property type="project" value="UniProtKB-SubCell"/>
</dbReference>
<dbReference type="GO" id="GO:0016020">
    <property type="term" value="C:membrane"/>
    <property type="evidence" value="ECO:0007669"/>
    <property type="project" value="UniProtKB-KW"/>
</dbReference>
<dbReference type="GO" id="GO:0044218">
    <property type="term" value="C:other organism cell membrane"/>
    <property type="evidence" value="ECO:0007669"/>
    <property type="project" value="UniProtKB-KW"/>
</dbReference>
<dbReference type="GO" id="GO:0050832">
    <property type="term" value="P:defense response to fungus"/>
    <property type="evidence" value="ECO:0007669"/>
    <property type="project" value="UniProtKB-KW"/>
</dbReference>
<dbReference type="GO" id="GO:0031640">
    <property type="term" value="P:killing of cells of another organism"/>
    <property type="evidence" value="ECO:0007669"/>
    <property type="project" value="UniProtKB-KW"/>
</dbReference>